<accession>A7H0L8</accession>
<evidence type="ECO:0000255" key="1">
    <source>
        <dbReference type="HAMAP-Rule" id="MF_01027"/>
    </source>
</evidence>
<proteinExistence type="inferred from homology"/>
<keyword id="KW-0004">4Fe-4S</keyword>
<keyword id="KW-0028">Amino-acid biosynthesis</keyword>
<keyword id="KW-0100">Branched-chain amino acid biosynthesis</keyword>
<keyword id="KW-0408">Iron</keyword>
<keyword id="KW-0411">Iron-sulfur</keyword>
<keyword id="KW-0432">Leucine biosynthesis</keyword>
<keyword id="KW-0456">Lyase</keyword>
<keyword id="KW-0479">Metal-binding</keyword>
<keyword id="KW-1185">Reference proteome</keyword>
<comment type="function">
    <text evidence="1">Catalyzes the isomerization between 2-isopropylmalate and 3-isopropylmalate, via the formation of 2-isopropylmaleate.</text>
</comment>
<comment type="catalytic activity">
    <reaction evidence="1">
        <text>(2R,3S)-3-isopropylmalate = (2S)-2-isopropylmalate</text>
        <dbReference type="Rhea" id="RHEA:32287"/>
        <dbReference type="ChEBI" id="CHEBI:1178"/>
        <dbReference type="ChEBI" id="CHEBI:35121"/>
        <dbReference type="EC" id="4.2.1.33"/>
    </reaction>
</comment>
<comment type="cofactor">
    <cofactor evidence="1">
        <name>[4Fe-4S] cluster</name>
        <dbReference type="ChEBI" id="CHEBI:49883"/>
    </cofactor>
    <text evidence="1">Binds 1 [4Fe-4S] cluster per subunit.</text>
</comment>
<comment type="pathway">
    <text evidence="1">Amino-acid biosynthesis; L-leucine biosynthesis; L-leucine from 3-methyl-2-oxobutanoate: step 2/4.</text>
</comment>
<comment type="subunit">
    <text evidence="1">Heterodimer of LeuC and LeuD.</text>
</comment>
<comment type="similarity">
    <text evidence="1">Belongs to the aconitase/IPM isomerase family. LeuC type 2 subfamily.</text>
</comment>
<gene>
    <name evidence="1" type="primary">leuC</name>
    <name type="ordered locus">Ccur92_17060</name>
    <name type="ORF">CCV52592_0608</name>
</gene>
<dbReference type="EC" id="4.2.1.33" evidence="1"/>
<dbReference type="EMBL" id="CP000767">
    <property type="protein sequence ID" value="EAU01448.1"/>
    <property type="molecule type" value="Genomic_DNA"/>
</dbReference>
<dbReference type="RefSeq" id="WP_011992759.1">
    <property type="nucleotide sequence ID" value="NC_009715.2"/>
</dbReference>
<dbReference type="SMR" id="A7H0L8"/>
<dbReference type="STRING" id="360105.CCV52592_0608"/>
<dbReference type="KEGG" id="ccv:CCV52592_0608"/>
<dbReference type="HOGENOM" id="CLU_006714_3_4_7"/>
<dbReference type="OrthoDB" id="9764318at2"/>
<dbReference type="UniPathway" id="UPA00048">
    <property type="reaction ID" value="UER00071"/>
</dbReference>
<dbReference type="Proteomes" id="UP000006380">
    <property type="component" value="Chromosome"/>
</dbReference>
<dbReference type="GO" id="GO:0003861">
    <property type="term" value="F:3-isopropylmalate dehydratase activity"/>
    <property type="evidence" value="ECO:0007669"/>
    <property type="project" value="UniProtKB-UniRule"/>
</dbReference>
<dbReference type="GO" id="GO:0051539">
    <property type="term" value="F:4 iron, 4 sulfur cluster binding"/>
    <property type="evidence" value="ECO:0007669"/>
    <property type="project" value="UniProtKB-KW"/>
</dbReference>
<dbReference type="GO" id="GO:0046872">
    <property type="term" value="F:metal ion binding"/>
    <property type="evidence" value="ECO:0007669"/>
    <property type="project" value="UniProtKB-KW"/>
</dbReference>
<dbReference type="GO" id="GO:0009098">
    <property type="term" value="P:L-leucine biosynthetic process"/>
    <property type="evidence" value="ECO:0007669"/>
    <property type="project" value="UniProtKB-UniRule"/>
</dbReference>
<dbReference type="CDD" id="cd01583">
    <property type="entry name" value="IPMI"/>
    <property type="match status" value="1"/>
</dbReference>
<dbReference type="Gene3D" id="3.30.499.10">
    <property type="entry name" value="Aconitase, domain 3"/>
    <property type="match status" value="2"/>
</dbReference>
<dbReference type="HAMAP" id="MF_01027">
    <property type="entry name" value="LeuC_type2"/>
    <property type="match status" value="1"/>
</dbReference>
<dbReference type="InterPro" id="IPR015931">
    <property type="entry name" value="Acnase/IPM_dHydase_lsu_aba_1/3"/>
</dbReference>
<dbReference type="InterPro" id="IPR001030">
    <property type="entry name" value="Acoase/IPM_deHydtase_lsu_aba"/>
</dbReference>
<dbReference type="InterPro" id="IPR018136">
    <property type="entry name" value="Aconitase_4Fe-4S_BS"/>
</dbReference>
<dbReference type="InterPro" id="IPR036008">
    <property type="entry name" value="Aconitase_4Fe-4S_dom"/>
</dbReference>
<dbReference type="InterPro" id="IPR011826">
    <property type="entry name" value="HAcnase/IPMdehydase_lsu_prok"/>
</dbReference>
<dbReference type="InterPro" id="IPR006251">
    <property type="entry name" value="Homoacnase/IPMdehydase_lsu"/>
</dbReference>
<dbReference type="InterPro" id="IPR050067">
    <property type="entry name" value="IPM_dehydratase_rel_enz"/>
</dbReference>
<dbReference type="InterPro" id="IPR033941">
    <property type="entry name" value="IPMI_cat"/>
</dbReference>
<dbReference type="InterPro" id="IPR011823">
    <property type="entry name" value="IsopropMal_deHydtase_lsu_bac"/>
</dbReference>
<dbReference type="NCBIfam" id="TIGR01343">
    <property type="entry name" value="hacA_fam"/>
    <property type="match status" value="1"/>
</dbReference>
<dbReference type="NCBIfam" id="TIGR02086">
    <property type="entry name" value="IPMI_arch"/>
    <property type="match status" value="1"/>
</dbReference>
<dbReference type="NCBIfam" id="TIGR02083">
    <property type="entry name" value="LEU2"/>
    <property type="match status" value="1"/>
</dbReference>
<dbReference type="NCBIfam" id="NF001614">
    <property type="entry name" value="PRK00402.1"/>
    <property type="match status" value="1"/>
</dbReference>
<dbReference type="PANTHER" id="PTHR43822:SF16">
    <property type="entry name" value="3-ISOPROPYLMALATE DEHYDRATASE LARGE SUBUNIT 2"/>
    <property type="match status" value="1"/>
</dbReference>
<dbReference type="PANTHER" id="PTHR43822">
    <property type="entry name" value="HOMOACONITASE, MITOCHONDRIAL-RELATED"/>
    <property type="match status" value="1"/>
</dbReference>
<dbReference type="Pfam" id="PF00330">
    <property type="entry name" value="Aconitase"/>
    <property type="match status" value="1"/>
</dbReference>
<dbReference type="PRINTS" id="PR00415">
    <property type="entry name" value="ACONITASE"/>
</dbReference>
<dbReference type="SUPFAM" id="SSF53732">
    <property type="entry name" value="Aconitase iron-sulfur domain"/>
    <property type="match status" value="1"/>
</dbReference>
<dbReference type="PROSITE" id="PS00450">
    <property type="entry name" value="ACONITASE_1"/>
    <property type="match status" value="1"/>
</dbReference>
<dbReference type="PROSITE" id="PS01244">
    <property type="entry name" value="ACONITASE_2"/>
    <property type="match status" value="1"/>
</dbReference>
<feature type="chain" id="PRO_1000063640" description="3-isopropylmalate dehydratase large subunit">
    <location>
        <begin position="1"/>
        <end position="421"/>
    </location>
</feature>
<feature type="binding site" evidence="1">
    <location>
        <position position="302"/>
    </location>
    <ligand>
        <name>[4Fe-4S] cluster</name>
        <dbReference type="ChEBI" id="CHEBI:49883"/>
    </ligand>
</feature>
<feature type="binding site" evidence="1">
    <location>
        <position position="362"/>
    </location>
    <ligand>
        <name>[4Fe-4S] cluster</name>
        <dbReference type="ChEBI" id="CHEBI:49883"/>
    </ligand>
</feature>
<feature type="binding site" evidence="1">
    <location>
        <position position="365"/>
    </location>
    <ligand>
        <name>[4Fe-4S] cluster</name>
        <dbReference type="ChEBI" id="CHEBI:49883"/>
    </ligand>
</feature>
<name>LEUC_CAMC5</name>
<protein>
    <recommendedName>
        <fullName evidence="1">3-isopropylmalate dehydratase large subunit</fullName>
        <ecNumber evidence="1">4.2.1.33</ecNumber>
    </recommendedName>
    <alternativeName>
        <fullName evidence="1">Alpha-IPM isomerase</fullName>
        <shortName evidence="1">IPMI</shortName>
    </alternativeName>
    <alternativeName>
        <fullName evidence="1">Isopropylmalate isomerase</fullName>
    </alternativeName>
</protein>
<reference key="1">
    <citation type="submission" date="2007-07" db="EMBL/GenBank/DDBJ databases">
        <title>Genome sequence of Campylobacter curvus 525.92 isolated from human feces.</title>
        <authorList>
            <person name="Fouts D.E."/>
            <person name="Mongodin E.F."/>
            <person name="Puiu D."/>
            <person name="Sebastian Y."/>
            <person name="Miller W.G."/>
            <person name="Mandrell R.E."/>
            <person name="Lastovica A.J."/>
            <person name="Nelson K.E."/>
        </authorList>
    </citation>
    <scope>NUCLEOTIDE SEQUENCE [LARGE SCALE GENOMIC DNA]</scope>
    <source>
        <strain>525.92</strain>
    </source>
</reference>
<organism>
    <name type="scientific">Campylobacter curvus (strain 525.92)</name>
    <dbReference type="NCBI Taxonomy" id="360105"/>
    <lineage>
        <taxon>Bacteria</taxon>
        <taxon>Pseudomonadati</taxon>
        <taxon>Campylobacterota</taxon>
        <taxon>Epsilonproteobacteria</taxon>
        <taxon>Campylobacterales</taxon>
        <taxon>Campylobacteraceae</taxon>
        <taxon>Campylobacter</taxon>
    </lineage>
</organism>
<sequence length="421" mass="45650">MHQTITEKIFSDHVGREVFANEIIESGIDMVIGNDITTPISIKQFERSGATKLANPEGFCIVMDHYIPAKDILSANQAKISRDFAYKHDLKYFFDEKDMGIEHALLPEKGLIVPGDVIIGADSHTCTHGALGAFSTGMGSTDLAYAMITGKNWFKVPPTIKVVFRGKLGRHVYGKDLILEIIRQIGVDGARYKALEFCGETIDALDMDGRFSMCNMAIEAGGKSGIIAVDETTREFLKGKNLRAEPKFFYSDEGAGYERVLEIYADKLDPVIAYPFLPSNGKSVREAVKDDIAIDQAFIGSCTNGRLSDLRIAAEILKGRKVSRKTRLIITPATQKIALAAQKEGLMDIFVEAGAVVSNPTCGACLGGYMGILGAGERCVSTTNRNFVGRMGDRTSEVYLANSAVAAASAIAGKIADPREL</sequence>